<keyword id="KW-0002">3D-structure</keyword>
<keyword id="KW-1015">Disulfide bond</keyword>
<keyword id="KW-0281">Fimbrium</keyword>
<keyword id="KW-0472">Membrane</keyword>
<keyword id="KW-0488">Methylation</keyword>
<keyword id="KW-1185">Reference proteome</keyword>
<keyword id="KW-0812">Transmembrane</keyword>
<keyword id="KW-1133">Transmembrane helix</keyword>
<dbReference type="EMBL" id="X74730">
    <property type="protein sequence ID" value="CAA52745.1"/>
    <property type="molecule type" value="Genomic_DNA"/>
</dbReference>
<dbReference type="EMBL" id="U09807">
    <property type="protein sequence ID" value="AAA85786.1"/>
    <property type="molecule type" value="Genomic_DNA"/>
</dbReference>
<dbReference type="EMBL" id="AE003852">
    <property type="protein sequence ID" value="AAF93991.1"/>
    <property type="molecule type" value="Genomic_DNA"/>
</dbReference>
<dbReference type="PIR" id="JC4719">
    <property type="entry name" value="JC4719"/>
</dbReference>
<dbReference type="RefSeq" id="NP_230476.1">
    <property type="nucleotide sequence ID" value="NC_002505.1"/>
</dbReference>
<dbReference type="RefSeq" id="WP_001176374.1">
    <property type="nucleotide sequence ID" value="NZ_LT906614.1"/>
</dbReference>
<dbReference type="PDB" id="3HRV">
    <property type="method" value="X-ray"/>
    <property type="resolution" value="1.50 A"/>
    <property type="chains" value="A/B=54-224"/>
</dbReference>
<dbReference type="PDBsum" id="3HRV"/>
<dbReference type="SMR" id="Q60153"/>
<dbReference type="STRING" id="243277.VC_0828"/>
<dbReference type="DNASU" id="2614495"/>
<dbReference type="EnsemblBacteria" id="AAF93991">
    <property type="protein sequence ID" value="AAF93991"/>
    <property type="gene ID" value="VC_0828"/>
</dbReference>
<dbReference type="KEGG" id="vch:VC_0828"/>
<dbReference type="PATRIC" id="fig|243277.26.peg.789"/>
<dbReference type="eggNOG" id="COG2165">
    <property type="taxonomic scope" value="Bacteria"/>
</dbReference>
<dbReference type="HOGENOM" id="CLU_1320422_0_0_6"/>
<dbReference type="EvolutionaryTrace" id="Q60153"/>
<dbReference type="PHI-base" id="PHI:10041"/>
<dbReference type="PHI-base" id="PHI:700"/>
<dbReference type="Proteomes" id="UP000000584">
    <property type="component" value="Chromosome 1"/>
</dbReference>
<dbReference type="GO" id="GO:0043230">
    <property type="term" value="C:extracellular organelle"/>
    <property type="evidence" value="ECO:0007669"/>
    <property type="project" value="InterPro"/>
</dbReference>
<dbReference type="GO" id="GO:0016020">
    <property type="term" value="C:membrane"/>
    <property type="evidence" value="ECO:0007669"/>
    <property type="project" value="UniProtKB-SubCell"/>
</dbReference>
<dbReference type="GO" id="GO:0009289">
    <property type="term" value="C:pilus"/>
    <property type="evidence" value="ECO:0007669"/>
    <property type="project" value="UniProtKB-SubCell"/>
</dbReference>
<dbReference type="GO" id="GO:0015627">
    <property type="term" value="C:type II protein secretion system complex"/>
    <property type="evidence" value="ECO:0000318"/>
    <property type="project" value="GO_Central"/>
</dbReference>
<dbReference type="GO" id="GO:0015628">
    <property type="term" value="P:protein secretion by the type II secretion system"/>
    <property type="evidence" value="ECO:0000318"/>
    <property type="project" value="GO_Central"/>
</dbReference>
<dbReference type="Gene3D" id="3.30.1690.10">
    <property type="entry name" value="TcpA-like pilin"/>
    <property type="match status" value="1"/>
</dbReference>
<dbReference type="InterPro" id="IPR012902">
    <property type="entry name" value="N_methyl_site"/>
</dbReference>
<dbReference type="InterPro" id="IPR045584">
    <property type="entry name" value="Pilin-like"/>
</dbReference>
<dbReference type="InterPro" id="IPR010271">
    <property type="entry name" value="TcpA"/>
</dbReference>
<dbReference type="NCBIfam" id="TIGR02532">
    <property type="entry name" value="IV_pilin_GFxxxE"/>
    <property type="match status" value="1"/>
</dbReference>
<dbReference type="Pfam" id="PF07963">
    <property type="entry name" value="N_methyl"/>
    <property type="match status" value="1"/>
</dbReference>
<dbReference type="Pfam" id="PF05946">
    <property type="entry name" value="TcpA"/>
    <property type="match status" value="1"/>
</dbReference>
<dbReference type="SUPFAM" id="SSF54523">
    <property type="entry name" value="Pili subunits"/>
    <property type="match status" value="1"/>
</dbReference>
<dbReference type="PROSITE" id="PS00409">
    <property type="entry name" value="PROKAR_NTER_METHYL"/>
    <property type="match status" value="1"/>
</dbReference>
<comment type="function">
    <text evidence="4 5 6">Major component of the toxin co-regulated pilus (tcp) which is a type IV pilus essential for bacterial aggregation and subsequent colonization in the host small intestine.</text>
</comment>
<comment type="subcellular location">
    <subcellularLocation>
        <location evidence="1">Fimbrium</location>
    </subcellularLocation>
    <subcellularLocation>
        <location evidence="7">Membrane</location>
        <topology evidence="7">Single-pass membrane protein</topology>
    </subcellularLocation>
</comment>
<comment type="induction">
    <text evidence="3">By ToxT that is required for tcpA transcriptional activation. Mechanistically, interacts directly with the tcpA promoter to mediate activation.</text>
</comment>
<comment type="domain">
    <text>The leader sequence region and some other sequence particularities suggest that TcpA may represent a novel class of pilin, and imply the existence of a novel signal peptidase.</text>
</comment>
<comment type="disruption phenotype">
    <text evidence="5 6">Deletion mutation abolishes Vibrio cholerae colonizing capacity (PubMed:2902187). It also shows loss of observable pili (PubMed:8594332).</text>
</comment>
<evidence type="ECO:0000250" key="1"/>
<evidence type="ECO:0000255" key="2">
    <source>
        <dbReference type="PROSITE-ProRule" id="PRU01070"/>
    </source>
</evidence>
<evidence type="ECO:0000269" key="3">
    <source>
    </source>
</evidence>
<evidence type="ECO:0000269" key="4">
    <source>
    </source>
</evidence>
<evidence type="ECO:0000269" key="5">
    <source>
    </source>
</evidence>
<evidence type="ECO:0000269" key="6">
    <source>
    </source>
</evidence>
<evidence type="ECO:0000305" key="7"/>
<evidence type="ECO:0007829" key="8">
    <source>
        <dbReference type="PDB" id="3HRV"/>
    </source>
</evidence>
<protein>
    <recommendedName>
        <fullName>Toxin coregulated pilin</fullName>
    </recommendedName>
    <alternativeName>
        <fullName>Pilus colonization factor</fullName>
    </alternativeName>
</protein>
<reference key="1">
    <citation type="journal article" date="1996" name="Gene">
        <title>Comparison of the promoter proximal regions of the toxin-co-regulated tcp gene cluster in classical and El Tor strains of Vibrio cholerae O1.</title>
        <authorList>
            <person name="Ogierman M.A."/>
            <person name="Voss E."/>
            <person name="Meaney C."/>
            <person name="Faast R."/>
            <person name="Attridge S.R."/>
            <person name="Manning P.A."/>
        </authorList>
    </citation>
    <scope>NUCLEOTIDE SEQUENCE [GENOMIC DNA]</scope>
    <source>
        <strain>El Tor H1 / Serotype O1</strain>
    </source>
</reference>
<reference key="2">
    <citation type="journal article" date="1994" name="Mol. Microbiol.">
        <title>TcpA pilin sequences and colonization requirements for O1 and O139 Vibrio cholerae.</title>
        <authorList>
            <person name="Rhine J.A."/>
            <person name="Taylor R.K."/>
        </authorList>
    </citation>
    <scope>NUCLEOTIDE SEQUENCE [GENOMIC DNA]</scope>
    <source>
        <strain>El Tor H1 / Serotype O1</strain>
    </source>
</reference>
<reference key="3">
    <citation type="journal article" date="2000" name="Nature">
        <title>DNA sequence of both chromosomes of the cholera pathogen Vibrio cholerae.</title>
        <authorList>
            <person name="Heidelberg J.F."/>
            <person name="Eisen J.A."/>
            <person name="Nelson W.C."/>
            <person name="Clayton R.A."/>
            <person name="Gwinn M.L."/>
            <person name="Dodson R.J."/>
            <person name="Haft D.H."/>
            <person name="Hickey E.K."/>
            <person name="Peterson J.D."/>
            <person name="Umayam L.A."/>
            <person name="Gill S.R."/>
            <person name="Nelson K.E."/>
            <person name="Read T.D."/>
            <person name="Tettelin H."/>
            <person name="Richardson D.L."/>
            <person name="Ermolaeva M.D."/>
            <person name="Vamathevan J.J."/>
            <person name="Bass S."/>
            <person name="Qin H."/>
            <person name="Dragoi I."/>
            <person name="Sellers P."/>
            <person name="McDonald L.A."/>
            <person name="Utterback T.R."/>
            <person name="Fleischmann R.D."/>
            <person name="Nierman W.C."/>
            <person name="White O."/>
            <person name="Salzberg S.L."/>
            <person name="Smith H.O."/>
            <person name="Colwell R.R."/>
            <person name="Mekalanos J.J."/>
            <person name="Venter J.C."/>
            <person name="Fraser C.M."/>
        </authorList>
    </citation>
    <scope>NUCLEOTIDE SEQUENCE [LARGE SCALE GENOMIC DNA]</scope>
    <source>
        <strain>ATCC 39315 / El Tor Inaba N16961</strain>
    </source>
</reference>
<reference key="4">
    <citation type="journal article" date="1988" name="J. Exp. Med.">
        <title>Toxin, toxin-coregulated pili, and the toxR regulon are essential for Vibrio cholerae pathogenesis in humans.</title>
        <authorList>
            <person name="Herrington D.A."/>
            <person name="Hall R.H."/>
            <person name="Losonsky G."/>
            <person name="Mekalanos J.J."/>
            <person name="Taylor R.K."/>
            <person name="Levine M.M."/>
        </authorList>
    </citation>
    <scope>FUNCTION</scope>
    <scope>DISRUPTION PHENOTYPE</scope>
</reference>
<reference key="5">
    <citation type="journal article" date="1995" name="Mol. Microbiol.">
        <title>Single amino acid substitutions in the N-terminus of Vibrio cholerae TcpA affect colonization, autoagglutination, and serum resistance.</title>
        <authorList>
            <person name="Chiang S.L."/>
            <person name="Taylor R.K."/>
            <person name="Koomey M."/>
            <person name="Mekalanos J.J."/>
        </authorList>
    </citation>
    <scope>FUNCTION</scope>
    <scope>MUTAGENESIS OF GLY-25; LEU-29 AND VAL-45</scope>
    <scope>DISRUPTION PHENOTYPE</scope>
</reference>
<reference key="6">
    <citation type="journal article" date="2002" name="J. Bacteriol.">
        <title>Mechanism of ToxT-dependent transcriptional activation at the Vibrio cholerae tcpA promoter.</title>
        <authorList>
            <person name="Hulbert R.R."/>
            <person name="Taylor R.K."/>
        </authorList>
    </citation>
    <scope>INDUCTION BY TOXT</scope>
</reference>
<reference key="7">
    <citation type="journal article" date="2010" name="Mol. Microbiol.">
        <title>Vibrio cholerae El Tor TcpA crystal structure and mechanism for pilus-mediated microcolony formation.</title>
        <authorList>
            <person name="Lim M.S."/>
            <person name="Ng D."/>
            <person name="Zong Z."/>
            <person name="Arvai A.S."/>
            <person name="Taylor R.K."/>
            <person name="Tainer J.A."/>
            <person name="Craig L."/>
        </authorList>
    </citation>
    <scope>X-RAY CRYSTALLOGRAPHY (1.50 ANGSTROMS) OF 54-224</scope>
    <scope>FUNCTION</scope>
    <scope>MUTAGENESIS OF CYS-145</scope>
</reference>
<organism>
    <name type="scientific">Vibrio cholerae serotype O1 (strain ATCC 39315 / El Tor Inaba N16961)</name>
    <dbReference type="NCBI Taxonomy" id="243277"/>
    <lineage>
        <taxon>Bacteria</taxon>
        <taxon>Pseudomonadati</taxon>
        <taxon>Pseudomonadota</taxon>
        <taxon>Gammaproteobacteria</taxon>
        <taxon>Vibrionales</taxon>
        <taxon>Vibrionaceae</taxon>
        <taxon>Vibrio</taxon>
    </lineage>
</organism>
<accession>Q60153</accession>
<sequence>MQLLKQLFKKKFVKEEHDKKTGQEGMTLLEVIIVLGIMGVVSAGVVTLAQRAIDSQNMTKAAQNLNSVQIAMTQTYRSLGNYPATANANAATQLANGLVSLGKVSADEAKNPFTGTAMGIFSFPRNSAANKAFAITVGGLTQAQCKTLVTSVGDMFPFINVKEGAFAAVADLGDFETSVADAATGAGVIKSIAPGSANLNLTNITHVEKLCTGTAPFTVAFGNS</sequence>
<name>TCPA_VIBCH</name>
<proteinExistence type="evidence at protein level"/>
<gene>
    <name type="primary">tcpA</name>
    <name type="ordered locus">VC_0828</name>
</gene>
<feature type="propeptide" id="PRO_0000024190" description="Atypical leader sequence" evidence="2">
    <location>
        <begin position="1"/>
        <end position="25"/>
    </location>
</feature>
<feature type="chain" id="PRO_0000024191" description="Toxin coregulated pilin">
    <location>
        <begin position="26"/>
        <end position="224"/>
    </location>
</feature>
<feature type="transmembrane region" description="Helical" evidence="7">
    <location>
        <begin position="26"/>
        <end position="46"/>
    </location>
</feature>
<feature type="modified residue" description="N-methylmethionine" evidence="2">
    <location>
        <position position="26"/>
    </location>
</feature>
<feature type="disulfide bond" evidence="1">
    <location>
        <begin position="145"/>
        <end position="211"/>
    </location>
</feature>
<feature type="mutagenesis site" description="Loss of autoagglutination and pili." evidence="6">
    <original>G</original>
    <variation>T</variation>
    <location>
        <position position="25"/>
    </location>
</feature>
<feature type="mutagenesis site" description="Loss of autoagglutination and pili." evidence="6">
    <original>L</original>
    <variation>M</variation>
    <location>
        <position position="29"/>
    </location>
</feature>
<feature type="mutagenesis site" description="Loss of autoagglutination but pili remain intact." evidence="6">
    <original>V</original>
    <variation>T</variation>
    <location>
        <position position="45"/>
    </location>
</feature>
<feature type="mutagenesis site" description="Loss of autoagglutination and pili." evidence="4">
    <original>C</original>
    <variation>S</variation>
    <location>
        <position position="145"/>
    </location>
</feature>
<feature type="helix" evidence="8">
    <location>
        <begin position="56"/>
        <end position="76"/>
    </location>
</feature>
<feature type="turn" evidence="8">
    <location>
        <begin position="77"/>
        <end position="79"/>
    </location>
</feature>
<feature type="helix" evidence="8">
    <location>
        <begin position="88"/>
        <end position="100"/>
    </location>
</feature>
<feature type="helix" evidence="8">
    <location>
        <begin position="106"/>
        <end position="109"/>
    </location>
</feature>
<feature type="turn" evidence="8">
    <location>
        <begin position="112"/>
        <end position="114"/>
    </location>
</feature>
<feature type="strand" evidence="8">
    <location>
        <begin position="115"/>
        <end position="117"/>
    </location>
</feature>
<feature type="strand" evidence="8">
    <location>
        <begin position="119"/>
        <end position="125"/>
    </location>
</feature>
<feature type="strand" evidence="8">
    <location>
        <begin position="128"/>
        <end position="140"/>
    </location>
</feature>
<feature type="helix" evidence="8">
    <location>
        <begin position="142"/>
        <end position="152"/>
    </location>
</feature>
<feature type="helix" evidence="8">
    <location>
        <begin position="153"/>
        <end position="155"/>
    </location>
</feature>
<feature type="strand" evidence="8">
    <location>
        <begin position="157"/>
        <end position="164"/>
    </location>
</feature>
<feature type="helix" evidence="8">
    <location>
        <begin position="169"/>
        <end position="172"/>
    </location>
</feature>
<feature type="turn" evidence="8">
    <location>
        <begin position="175"/>
        <end position="177"/>
    </location>
</feature>
<feature type="helix" evidence="8">
    <location>
        <begin position="182"/>
        <end position="184"/>
    </location>
</feature>
<feature type="strand" evidence="8">
    <location>
        <begin position="186"/>
        <end position="190"/>
    </location>
</feature>
<feature type="helix" evidence="8">
    <location>
        <begin position="204"/>
        <end position="209"/>
    </location>
</feature>
<feature type="strand" evidence="8">
    <location>
        <begin position="213"/>
        <end position="215"/>
    </location>
</feature>
<feature type="strand" evidence="8">
    <location>
        <begin position="217"/>
        <end position="223"/>
    </location>
</feature>